<keyword id="KW-0413">Isomerase</keyword>
<keyword id="KW-1185">Reference proteome</keyword>
<keyword id="KW-0694">RNA-binding</keyword>
<keyword id="KW-0819">tRNA processing</keyword>
<gene>
    <name evidence="1" type="primary">pus10</name>
    <name type="ordered locus">Mthe_0992</name>
</gene>
<feature type="chain" id="PRO_0000407390" description="tRNA pseudouridine synthase Pus10">
    <location>
        <begin position="1"/>
        <end position="452"/>
    </location>
</feature>
<feature type="domain" description="THUMP" evidence="1">
    <location>
        <begin position="71"/>
        <end position="200"/>
    </location>
</feature>
<feature type="active site" description="Nucleophile" evidence="1">
    <location>
        <position position="269"/>
    </location>
</feature>
<feature type="binding site" evidence="1">
    <location>
        <position position="335"/>
    </location>
    <ligand>
        <name>substrate</name>
    </ligand>
</feature>
<feature type="binding site" evidence="1">
    <location>
        <position position="406"/>
    </location>
    <ligand>
        <name>substrate</name>
    </ligand>
</feature>
<comment type="function">
    <text evidence="1">Responsible for synthesis of pseudouridine from uracil-54 and uracil-55 in the psi GC loop of transfer RNAs.</text>
</comment>
<comment type="catalytic activity">
    <reaction evidence="1">
        <text>uridine(54) in tRNA = pseudouridine(54) in tRNA</text>
        <dbReference type="Rhea" id="RHEA:57876"/>
        <dbReference type="Rhea" id="RHEA-COMP:10193"/>
        <dbReference type="Rhea" id="RHEA-COMP:14141"/>
        <dbReference type="ChEBI" id="CHEBI:65314"/>
        <dbReference type="ChEBI" id="CHEBI:65315"/>
    </reaction>
</comment>
<comment type="catalytic activity">
    <reaction evidence="1">
        <text>uridine(55) in tRNA = pseudouridine(55) in tRNA</text>
        <dbReference type="Rhea" id="RHEA:42532"/>
        <dbReference type="Rhea" id="RHEA-COMP:10101"/>
        <dbReference type="Rhea" id="RHEA-COMP:10102"/>
        <dbReference type="ChEBI" id="CHEBI:65314"/>
        <dbReference type="ChEBI" id="CHEBI:65315"/>
        <dbReference type="EC" id="5.4.99.25"/>
    </reaction>
</comment>
<comment type="similarity">
    <text evidence="1">Belongs to the pseudouridine synthase Pus10 family.</text>
</comment>
<evidence type="ECO:0000255" key="1">
    <source>
        <dbReference type="HAMAP-Rule" id="MF_01893"/>
    </source>
</evidence>
<organism>
    <name type="scientific">Methanothrix thermoacetophila (strain DSM 6194 / JCM 14653 / NBRC 101360 / PT)</name>
    <name type="common">Methanosaeta thermophila</name>
    <dbReference type="NCBI Taxonomy" id="349307"/>
    <lineage>
        <taxon>Archaea</taxon>
        <taxon>Methanobacteriati</taxon>
        <taxon>Methanobacteriota</taxon>
        <taxon>Stenosarchaea group</taxon>
        <taxon>Methanomicrobia</taxon>
        <taxon>Methanotrichales</taxon>
        <taxon>Methanotrichaceae</taxon>
        <taxon>Methanothrix</taxon>
    </lineage>
</organism>
<sequence>MPSENPTDNCIASDLISTAVRILRLGPICDSCFGRQFAMLGTGMTNSERGRSIKTLMVMSADLQASDESREMLRALAPSCRQARLRLGVEGDDENCWVCLGQMYPERLEELADRAVDELKGIECSRFLVGTFMSGLLAENEELLLADGCSRHAEPMKSEINREVGKLIALKSGKQPDLNNPEVVVHLHLSDGHVEIQIQPLYIYGRYRKLQRGFPQTRWPCRVCGGRGCERCGNTGRMYQESVDELIRGPIVEAADAEDTVFHGAGREDIDARMLGSGRPFVVEVVRPRRRDLDLNALRDEINRRCSGKVEVSDLIFVDKSMVEMVKNERFEKTYEALIEFSVPVEEEKLKSALSRLIGFVEQRTPTRVSHRRADKVRRRAVHSAELEEFSGRTARITVRCDSGLYVKELISGDAGRTRPSLAELLESDARVVELDVIDVGGVPNAKITRIS</sequence>
<accession>A0B7V3</accession>
<proteinExistence type="inferred from homology"/>
<protein>
    <recommendedName>
        <fullName evidence="1">tRNA pseudouridine synthase Pus10</fullName>
        <ecNumber evidence="1">5.4.99.25</ecNumber>
    </recommendedName>
    <alternativeName>
        <fullName evidence="1">tRNA pseudouridine 54/55 synthase</fullName>
        <shortName evidence="1">Psi54/55 synthase</shortName>
    </alternativeName>
</protein>
<name>PUS10_METTP</name>
<dbReference type="EC" id="5.4.99.25" evidence="1"/>
<dbReference type="EMBL" id="CP000477">
    <property type="protein sequence ID" value="ABK14777.1"/>
    <property type="molecule type" value="Genomic_DNA"/>
</dbReference>
<dbReference type="RefSeq" id="WP_011696171.1">
    <property type="nucleotide sequence ID" value="NC_008553.1"/>
</dbReference>
<dbReference type="SMR" id="A0B7V3"/>
<dbReference type="STRING" id="349307.Mthe_0992"/>
<dbReference type="GeneID" id="4462868"/>
<dbReference type="KEGG" id="mtp:Mthe_0992"/>
<dbReference type="HOGENOM" id="CLU_028780_2_0_2"/>
<dbReference type="OrthoDB" id="10348at2157"/>
<dbReference type="Proteomes" id="UP000000674">
    <property type="component" value="Chromosome"/>
</dbReference>
<dbReference type="GO" id="GO:0000049">
    <property type="term" value="F:tRNA binding"/>
    <property type="evidence" value="ECO:0007669"/>
    <property type="project" value="InterPro"/>
</dbReference>
<dbReference type="GO" id="GO:0160148">
    <property type="term" value="F:tRNA pseudouridine(55) synthase activity"/>
    <property type="evidence" value="ECO:0007669"/>
    <property type="project" value="UniProtKB-EC"/>
</dbReference>
<dbReference type="GO" id="GO:0031119">
    <property type="term" value="P:tRNA pseudouridine synthesis"/>
    <property type="evidence" value="ECO:0007669"/>
    <property type="project" value="UniProtKB-UniRule"/>
</dbReference>
<dbReference type="FunFam" id="3.30.70.2510:FF:000001">
    <property type="entry name" value="tRNA pseudouridine synthase Pus10"/>
    <property type="match status" value="1"/>
</dbReference>
<dbReference type="Gene3D" id="3.30.70.2510">
    <property type="match status" value="1"/>
</dbReference>
<dbReference type="Gene3D" id="3.30.70.3190">
    <property type="match status" value="1"/>
</dbReference>
<dbReference type="HAMAP" id="MF_01893">
    <property type="entry name" value="Pus10_arch"/>
    <property type="match status" value="1"/>
</dbReference>
<dbReference type="InterPro" id="IPR020103">
    <property type="entry name" value="PsdUridine_synth_cat_dom_sf"/>
</dbReference>
<dbReference type="InterPro" id="IPR005912">
    <property type="entry name" value="Pus10"/>
</dbReference>
<dbReference type="InterPro" id="IPR039894">
    <property type="entry name" value="Pus10-like"/>
</dbReference>
<dbReference type="InterPro" id="IPR048741">
    <property type="entry name" value="Pus10-like_C"/>
</dbReference>
<dbReference type="InterPro" id="IPR055174">
    <property type="entry name" value="Pus10_THUMP_arc"/>
</dbReference>
<dbReference type="InterPro" id="IPR004114">
    <property type="entry name" value="THUMP_dom"/>
</dbReference>
<dbReference type="NCBIfam" id="TIGR01213">
    <property type="entry name" value="pseudo_Pus10arc"/>
    <property type="match status" value="1"/>
</dbReference>
<dbReference type="PANTHER" id="PTHR21568">
    <property type="entry name" value="TRNA PSEUDOURIDINE SYNTHASE PUS10"/>
    <property type="match status" value="1"/>
</dbReference>
<dbReference type="PANTHER" id="PTHR21568:SF0">
    <property type="entry name" value="TRNA PSEUDOURIDINE SYNTHASE PUS10"/>
    <property type="match status" value="1"/>
</dbReference>
<dbReference type="Pfam" id="PF21238">
    <property type="entry name" value="Pus10_C"/>
    <property type="match status" value="1"/>
</dbReference>
<dbReference type="Pfam" id="PF22023">
    <property type="entry name" value="Pus10_THUMP_arc"/>
    <property type="match status" value="1"/>
</dbReference>
<dbReference type="SUPFAM" id="SSF55120">
    <property type="entry name" value="Pseudouridine synthase"/>
    <property type="match status" value="1"/>
</dbReference>
<dbReference type="PROSITE" id="PS51165">
    <property type="entry name" value="THUMP"/>
    <property type="match status" value="1"/>
</dbReference>
<reference key="1">
    <citation type="submission" date="2006-10" db="EMBL/GenBank/DDBJ databases">
        <title>Complete sequence of Methanosaeta thermophila PT.</title>
        <authorList>
            <consortium name="US DOE Joint Genome Institute"/>
            <person name="Copeland A."/>
            <person name="Lucas S."/>
            <person name="Lapidus A."/>
            <person name="Barry K."/>
            <person name="Detter J.C."/>
            <person name="Glavina del Rio T."/>
            <person name="Hammon N."/>
            <person name="Israni S."/>
            <person name="Pitluck S."/>
            <person name="Chain P."/>
            <person name="Malfatti S."/>
            <person name="Shin M."/>
            <person name="Vergez L."/>
            <person name="Schmutz J."/>
            <person name="Larimer F."/>
            <person name="Land M."/>
            <person name="Hauser L."/>
            <person name="Kyrpides N."/>
            <person name="Kim E."/>
            <person name="Smith K.S."/>
            <person name="Ingram-Smith C."/>
            <person name="Richardson P."/>
        </authorList>
    </citation>
    <scope>NUCLEOTIDE SEQUENCE [LARGE SCALE GENOMIC DNA]</scope>
    <source>
        <strain>DSM 6194 / JCM 14653 / NBRC 101360 / PT</strain>
    </source>
</reference>